<dbReference type="EC" id="6.1.1.7" evidence="1"/>
<dbReference type="EMBL" id="CP000563">
    <property type="protein sequence ID" value="ABN62596.1"/>
    <property type="molecule type" value="Genomic_DNA"/>
</dbReference>
<dbReference type="RefSeq" id="WP_011847430.1">
    <property type="nucleotide sequence ID" value="NC_009052.1"/>
</dbReference>
<dbReference type="SMR" id="A3D783"/>
<dbReference type="STRING" id="325240.Sbal_3115"/>
<dbReference type="KEGG" id="sbl:Sbal_3115"/>
<dbReference type="HOGENOM" id="CLU_004485_1_1_6"/>
<dbReference type="OrthoDB" id="9803884at2"/>
<dbReference type="Proteomes" id="UP000001557">
    <property type="component" value="Chromosome"/>
</dbReference>
<dbReference type="GO" id="GO:0005829">
    <property type="term" value="C:cytosol"/>
    <property type="evidence" value="ECO:0007669"/>
    <property type="project" value="TreeGrafter"/>
</dbReference>
<dbReference type="GO" id="GO:0004813">
    <property type="term" value="F:alanine-tRNA ligase activity"/>
    <property type="evidence" value="ECO:0007669"/>
    <property type="project" value="UniProtKB-UniRule"/>
</dbReference>
<dbReference type="GO" id="GO:0002161">
    <property type="term" value="F:aminoacyl-tRNA deacylase activity"/>
    <property type="evidence" value="ECO:0007669"/>
    <property type="project" value="TreeGrafter"/>
</dbReference>
<dbReference type="GO" id="GO:0005524">
    <property type="term" value="F:ATP binding"/>
    <property type="evidence" value="ECO:0007669"/>
    <property type="project" value="UniProtKB-UniRule"/>
</dbReference>
<dbReference type="GO" id="GO:0000049">
    <property type="term" value="F:tRNA binding"/>
    <property type="evidence" value="ECO:0007669"/>
    <property type="project" value="UniProtKB-KW"/>
</dbReference>
<dbReference type="GO" id="GO:0008270">
    <property type="term" value="F:zinc ion binding"/>
    <property type="evidence" value="ECO:0007669"/>
    <property type="project" value="UniProtKB-UniRule"/>
</dbReference>
<dbReference type="GO" id="GO:0006419">
    <property type="term" value="P:alanyl-tRNA aminoacylation"/>
    <property type="evidence" value="ECO:0007669"/>
    <property type="project" value="UniProtKB-UniRule"/>
</dbReference>
<dbReference type="GO" id="GO:0045892">
    <property type="term" value="P:negative regulation of DNA-templated transcription"/>
    <property type="evidence" value="ECO:0007669"/>
    <property type="project" value="TreeGrafter"/>
</dbReference>
<dbReference type="CDD" id="cd00673">
    <property type="entry name" value="AlaRS_core"/>
    <property type="match status" value="1"/>
</dbReference>
<dbReference type="FunFam" id="2.40.30.130:FF:000001">
    <property type="entry name" value="Alanine--tRNA ligase"/>
    <property type="match status" value="1"/>
</dbReference>
<dbReference type="FunFam" id="3.10.310.40:FF:000001">
    <property type="entry name" value="Alanine--tRNA ligase"/>
    <property type="match status" value="1"/>
</dbReference>
<dbReference type="FunFam" id="3.30.54.20:FF:000001">
    <property type="entry name" value="Alanine--tRNA ligase"/>
    <property type="match status" value="1"/>
</dbReference>
<dbReference type="FunFam" id="3.30.930.10:FF:000004">
    <property type="entry name" value="Alanine--tRNA ligase"/>
    <property type="match status" value="1"/>
</dbReference>
<dbReference type="FunFam" id="3.30.980.10:FF:000004">
    <property type="entry name" value="Alanine--tRNA ligase, cytoplasmic"/>
    <property type="match status" value="1"/>
</dbReference>
<dbReference type="Gene3D" id="2.40.30.130">
    <property type="match status" value="1"/>
</dbReference>
<dbReference type="Gene3D" id="3.10.310.40">
    <property type="match status" value="1"/>
</dbReference>
<dbReference type="Gene3D" id="3.30.54.20">
    <property type="match status" value="1"/>
</dbReference>
<dbReference type="Gene3D" id="6.10.250.550">
    <property type="match status" value="1"/>
</dbReference>
<dbReference type="Gene3D" id="3.30.930.10">
    <property type="entry name" value="Bira Bifunctional Protein, Domain 2"/>
    <property type="match status" value="1"/>
</dbReference>
<dbReference type="Gene3D" id="3.30.980.10">
    <property type="entry name" value="Threonyl-trna Synthetase, Chain A, domain 2"/>
    <property type="match status" value="1"/>
</dbReference>
<dbReference type="HAMAP" id="MF_00036_B">
    <property type="entry name" value="Ala_tRNA_synth_B"/>
    <property type="match status" value="1"/>
</dbReference>
<dbReference type="InterPro" id="IPR045864">
    <property type="entry name" value="aa-tRNA-synth_II/BPL/LPL"/>
</dbReference>
<dbReference type="InterPro" id="IPR002318">
    <property type="entry name" value="Ala-tRNA-lgiase_IIc"/>
</dbReference>
<dbReference type="InterPro" id="IPR018162">
    <property type="entry name" value="Ala-tRNA-ligase_IIc_anticod-bd"/>
</dbReference>
<dbReference type="InterPro" id="IPR018165">
    <property type="entry name" value="Ala-tRNA-synth_IIc_core"/>
</dbReference>
<dbReference type="InterPro" id="IPR018164">
    <property type="entry name" value="Ala-tRNA-synth_IIc_N"/>
</dbReference>
<dbReference type="InterPro" id="IPR050058">
    <property type="entry name" value="Ala-tRNA_ligase"/>
</dbReference>
<dbReference type="InterPro" id="IPR023033">
    <property type="entry name" value="Ala_tRNA_ligase_euk/bac"/>
</dbReference>
<dbReference type="InterPro" id="IPR003156">
    <property type="entry name" value="DHHA1_dom"/>
</dbReference>
<dbReference type="InterPro" id="IPR018163">
    <property type="entry name" value="Thr/Ala-tRNA-synth_IIc_edit"/>
</dbReference>
<dbReference type="InterPro" id="IPR009000">
    <property type="entry name" value="Transl_B-barrel_sf"/>
</dbReference>
<dbReference type="InterPro" id="IPR012947">
    <property type="entry name" value="tRNA_SAD"/>
</dbReference>
<dbReference type="NCBIfam" id="TIGR00344">
    <property type="entry name" value="alaS"/>
    <property type="match status" value="1"/>
</dbReference>
<dbReference type="PANTHER" id="PTHR11777:SF9">
    <property type="entry name" value="ALANINE--TRNA LIGASE, CYTOPLASMIC"/>
    <property type="match status" value="1"/>
</dbReference>
<dbReference type="PANTHER" id="PTHR11777">
    <property type="entry name" value="ALANYL-TRNA SYNTHETASE"/>
    <property type="match status" value="1"/>
</dbReference>
<dbReference type="Pfam" id="PF02272">
    <property type="entry name" value="DHHA1"/>
    <property type="match status" value="1"/>
</dbReference>
<dbReference type="Pfam" id="PF01411">
    <property type="entry name" value="tRNA-synt_2c"/>
    <property type="match status" value="1"/>
</dbReference>
<dbReference type="Pfam" id="PF07973">
    <property type="entry name" value="tRNA_SAD"/>
    <property type="match status" value="1"/>
</dbReference>
<dbReference type="PRINTS" id="PR00980">
    <property type="entry name" value="TRNASYNTHALA"/>
</dbReference>
<dbReference type="SMART" id="SM00863">
    <property type="entry name" value="tRNA_SAD"/>
    <property type="match status" value="1"/>
</dbReference>
<dbReference type="SUPFAM" id="SSF55681">
    <property type="entry name" value="Class II aaRS and biotin synthetases"/>
    <property type="match status" value="1"/>
</dbReference>
<dbReference type="SUPFAM" id="SSF101353">
    <property type="entry name" value="Putative anticodon-binding domain of alanyl-tRNA synthetase (AlaRS)"/>
    <property type="match status" value="1"/>
</dbReference>
<dbReference type="SUPFAM" id="SSF55186">
    <property type="entry name" value="ThrRS/AlaRS common domain"/>
    <property type="match status" value="1"/>
</dbReference>
<dbReference type="SUPFAM" id="SSF50447">
    <property type="entry name" value="Translation proteins"/>
    <property type="match status" value="1"/>
</dbReference>
<dbReference type="PROSITE" id="PS50860">
    <property type="entry name" value="AA_TRNA_LIGASE_II_ALA"/>
    <property type="match status" value="1"/>
</dbReference>
<reference key="1">
    <citation type="submission" date="2007-02" db="EMBL/GenBank/DDBJ databases">
        <title>Complete sequence of chromosome of Shewanella baltica OS155.</title>
        <authorList>
            <consortium name="US DOE Joint Genome Institute"/>
            <person name="Copeland A."/>
            <person name="Lucas S."/>
            <person name="Lapidus A."/>
            <person name="Barry K."/>
            <person name="Detter J.C."/>
            <person name="Glavina del Rio T."/>
            <person name="Hammon N."/>
            <person name="Israni S."/>
            <person name="Dalin E."/>
            <person name="Tice H."/>
            <person name="Pitluck S."/>
            <person name="Sims D.R."/>
            <person name="Brettin T."/>
            <person name="Bruce D."/>
            <person name="Han C."/>
            <person name="Tapia R."/>
            <person name="Brainard J."/>
            <person name="Schmutz J."/>
            <person name="Larimer F."/>
            <person name="Land M."/>
            <person name="Hauser L."/>
            <person name="Kyrpides N."/>
            <person name="Mikhailova N."/>
            <person name="Brettar I."/>
            <person name="Klappenbach J."/>
            <person name="Konstantinidis K."/>
            <person name="Rodrigues J."/>
            <person name="Tiedje J."/>
            <person name="Richardson P."/>
        </authorList>
    </citation>
    <scope>NUCLEOTIDE SEQUENCE [LARGE SCALE GENOMIC DNA]</scope>
    <source>
        <strain>OS155 / ATCC BAA-1091</strain>
    </source>
</reference>
<gene>
    <name evidence="1" type="primary">alaS</name>
    <name type="ordered locus">Sbal_3115</name>
</gene>
<accession>A3D783</accession>
<comment type="function">
    <text evidence="1">Catalyzes the attachment of alanine to tRNA(Ala) in a two-step reaction: alanine is first activated by ATP to form Ala-AMP and then transferred to the acceptor end of tRNA(Ala). Also edits incorrectly charged Ser-tRNA(Ala) and Gly-tRNA(Ala) via its editing domain.</text>
</comment>
<comment type="catalytic activity">
    <reaction evidence="1">
        <text>tRNA(Ala) + L-alanine + ATP = L-alanyl-tRNA(Ala) + AMP + diphosphate</text>
        <dbReference type="Rhea" id="RHEA:12540"/>
        <dbReference type="Rhea" id="RHEA-COMP:9657"/>
        <dbReference type="Rhea" id="RHEA-COMP:9923"/>
        <dbReference type="ChEBI" id="CHEBI:30616"/>
        <dbReference type="ChEBI" id="CHEBI:33019"/>
        <dbReference type="ChEBI" id="CHEBI:57972"/>
        <dbReference type="ChEBI" id="CHEBI:78442"/>
        <dbReference type="ChEBI" id="CHEBI:78497"/>
        <dbReference type="ChEBI" id="CHEBI:456215"/>
        <dbReference type="EC" id="6.1.1.7"/>
    </reaction>
</comment>
<comment type="cofactor">
    <cofactor evidence="1">
        <name>Zn(2+)</name>
        <dbReference type="ChEBI" id="CHEBI:29105"/>
    </cofactor>
    <text evidence="1">Binds 1 zinc ion per subunit.</text>
</comment>
<comment type="subcellular location">
    <subcellularLocation>
        <location evidence="1">Cytoplasm</location>
    </subcellularLocation>
</comment>
<comment type="domain">
    <text evidence="1">Consists of three domains; the N-terminal catalytic domain, the editing domain and the C-terminal C-Ala domain. The editing domain removes incorrectly charged amino acids, while the C-Ala domain, along with tRNA(Ala), serves as a bridge to cooperatively bring together the editing and aminoacylation centers thus stimulating deacylation of misacylated tRNAs.</text>
</comment>
<comment type="similarity">
    <text evidence="1">Belongs to the class-II aminoacyl-tRNA synthetase family.</text>
</comment>
<organism>
    <name type="scientific">Shewanella baltica (strain OS155 / ATCC BAA-1091)</name>
    <dbReference type="NCBI Taxonomy" id="325240"/>
    <lineage>
        <taxon>Bacteria</taxon>
        <taxon>Pseudomonadati</taxon>
        <taxon>Pseudomonadota</taxon>
        <taxon>Gammaproteobacteria</taxon>
        <taxon>Alteromonadales</taxon>
        <taxon>Shewanellaceae</taxon>
        <taxon>Shewanella</taxon>
    </lineage>
</organism>
<proteinExistence type="inferred from homology"/>
<protein>
    <recommendedName>
        <fullName evidence="1">Alanine--tRNA ligase</fullName>
        <ecNumber evidence="1">6.1.1.7</ecNumber>
    </recommendedName>
    <alternativeName>
        <fullName evidence="1">Alanyl-tRNA synthetase</fullName>
        <shortName evidence="1">AlaRS</shortName>
    </alternativeName>
</protein>
<evidence type="ECO:0000255" key="1">
    <source>
        <dbReference type="HAMAP-Rule" id="MF_00036"/>
    </source>
</evidence>
<feature type="chain" id="PRO_0000347781" description="Alanine--tRNA ligase">
    <location>
        <begin position="1"/>
        <end position="874"/>
    </location>
</feature>
<feature type="binding site" evidence="1">
    <location>
        <position position="562"/>
    </location>
    <ligand>
        <name>Zn(2+)</name>
        <dbReference type="ChEBI" id="CHEBI:29105"/>
    </ligand>
</feature>
<feature type="binding site" evidence="1">
    <location>
        <position position="566"/>
    </location>
    <ligand>
        <name>Zn(2+)</name>
        <dbReference type="ChEBI" id="CHEBI:29105"/>
    </ligand>
</feature>
<feature type="binding site" evidence="1">
    <location>
        <position position="664"/>
    </location>
    <ligand>
        <name>Zn(2+)</name>
        <dbReference type="ChEBI" id="CHEBI:29105"/>
    </ligand>
</feature>
<feature type="binding site" evidence="1">
    <location>
        <position position="668"/>
    </location>
    <ligand>
        <name>Zn(2+)</name>
        <dbReference type="ChEBI" id="CHEBI:29105"/>
    </ligand>
</feature>
<keyword id="KW-0030">Aminoacyl-tRNA synthetase</keyword>
<keyword id="KW-0067">ATP-binding</keyword>
<keyword id="KW-0963">Cytoplasm</keyword>
<keyword id="KW-0436">Ligase</keyword>
<keyword id="KW-0479">Metal-binding</keyword>
<keyword id="KW-0547">Nucleotide-binding</keyword>
<keyword id="KW-0648">Protein biosynthesis</keyword>
<keyword id="KW-1185">Reference proteome</keyword>
<keyword id="KW-0694">RNA-binding</keyword>
<keyword id="KW-0820">tRNA-binding</keyword>
<keyword id="KW-0862">Zinc</keyword>
<name>SYA_SHEB5</name>
<sequence>MYQTTAELRSAFLEFFRSNGHQVVDSSSLVPGNDPTLLFTNAGMNQFKDVFLGMDKRNYTRATTAQRCVRAGGKHNDLDNVGYTARHHTFFEMLGNFSFGDYFKEEAIRFGWTFLTETLKLPKERLCVTIYQTDDEAFEIWNKKIGVAAENIIRIGDNKGAAYASDNFWQMGDTGPCGPCSEIFYDHGDHIWGGRPGSPEEDGDRFIEIWNIVFMQYNRQASGEMLPLPKPSVDTGMGIERIAAIMQGVHSNYEIDIFRTLIAKAAEIIGVSDLTEKSLRVIADHIRSCAFLIADGVMPSNEGRGYVLRRIIRRAVRHGNKLGATEAFFYKLVPSLIAVMGDAAKGLAETQAIVEKALKAEEEQFARTLERGLGILDTALNELKGTTLDGETVFKLYDTYGFPMDLTADVCRERNIIVDEAGFEVAMAEQRSRAQAAGNFGADYNAALKIDAETAFSGYTELAGQAKITAIYQNGESVTAIKAGDEAVVVLDVTPFYAESGGQVGDKGQLVASGVEFTVNDTQKYGQATGHQGVLATGNLSVGQVVEAKVDKKLRHRTQLNHSVTHLLHAALRQVLGTHVSQKGSLVDPERLRFDFSHFEGVKAAELKEVEELVNTQIRRNHELKTAEMGIDEAKEKGAMALFGEKYDSQVRVVTMGDFSIELCGGTHVGRTGDIGLFKITSEAGIAAGVRRIEAVTGAAAMAYVAQQQAELEEAAALLKGDANSVVAKLKAQLDKMKQLEKEMAQLKDKLAAAASADLVGDAVVVNGVNVLIKKLDGVEASSLRGLQDELKQKLKSAIIVLGTAQEGKVNLIAGVSNDLIGKVKAGELVAMVAAQVGGKGGGRPDMAQAGGSQPENLDAALAQVLPWITERLA</sequence>